<evidence type="ECO:0000255" key="1">
    <source>
        <dbReference type="HAMAP-Rule" id="MF_00049"/>
    </source>
</evidence>
<reference key="1">
    <citation type="journal article" date="2002" name="Environ. Microbiol.">
        <title>Complete genome sequence and comparative analysis of the metabolically versatile Pseudomonas putida KT2440.</title>
        <authorList>
            <person name="Nelson K.E."/>
            <person name="Weinel C."/>
            <person name="Paulsen I.T."/>
            <person name="Dodson R.J."/>
            <person name="Hilbert H."/>
            <person name="Martins dos Santos V.A.P."/>
            <person name="Fouts D.E."/>
            <person name="Gill S.R."/>
            <person name="Pop M."/>
            <person name="Holmes M."/>
            <person name="Brinkac L.M."/>
            <person name="Beanan M.J."/>
            <person name="DeBoy R.T."/>
            <person name="Daugherty S.C."/>
            <person name="Kolonay J.F."/>
            <person name="Madupu R."/>
            <person name="Nelson W.C."/>
            <person name="White O."/>
            <person name="Peterson J.D."/>
            <person name="Khouri H.M."/>
            <person name="Hance I."/>
            <person name="Chris Lee P."/>
            <person name="Holtzapple E.K."/>
            <person name="Scanlan D."/>
            <person name="Tran K."/>
            <person name="Moazzez A."/>
            <person name="Utterback T.R."/>
            <person name="Rizzo M."/>
            <person name="Lee K."/>
            <person name="Kosack D."/>
            <person name="Moestl D."/>
            <person name="Wedler H."/>
            <person name="Lauber J."/>
            <person name="Stjepandic D."/>
            <person name="Hoheisel J."/>
            <person name="Straetz M."/>
            <person name="Heim S."/>
            <person name="Kiewitz C."/>
            <person name="Eisen J.A."/>
            <person name="Timmis K.N."/>
            <person name="Duesterhoeft A."/>
            <person name="Tuemmler B."/>
            <person name="Fraser C.M."/>
        </authorList>
    </citation>
    <scope>NUCLEOTIDE SEQUENCE [LARGE SCALE GENOMIC DNA]</scope>
    <source>
        <strain>ATCC 47054 / DSM 6125 / CFBP 8728 / NCIMB 11950 / KT2440</strain>
    </source>
</reference>
<dbReference type="EC" id="6.1.1.4" evidence="1"/>
<dbReference type="EMBL" id="AE015451">
    <property type="protein sequence ID" value="AAN70363.1"/>
    <property type="molecule type" value="Genomic_DNA"/>
</dbReference>
<dbReference type="RefSeq" id="NP_746899.1">
    <property type="nucleotide sequence ID" value="NC_002947.4"/>
</dbReference>
<dbReference type="RefSeq" id="WP_010955412.1">
    <property type="nucleotide sequence ID" value="NZ_CP169744.1"/>
</dbReference>
<dbReference type="SMR" id="Q88DN1"/>
<dbReference type="STRING" id="160488.PP_4794"/>
<dbReference type="PaxDb" id="160488-PP_4794"/>
<dbReference type="GeneID" id="83682520"/>
<dbReference type="KEGG" id="ppu:PP_4794"/>
<dbReference type="PATRIC" id="fig|160488.4.peg.5116"/>
<dbReference type="eggNOG" id="COG0495">
    <property type="taxonomic scope" value="Bacteria"/>
</dbReference>
<dbReference type="HOGENOM" id="CLU_004427_0_0_6"/>
<dbReference type="OrthoDB" id="9810365at2"/>
<dbReference type="PhylomeDB" id="Q88DN1"/>
<dbReference type="BioCyc" id="PPUT160488:G1G01-5131-MONOMER"/>
<dbReference type="Proteomes" id="UP000000556">
    <property type="component" value="Chromosome"/>
</dbReference>
<dbReference type="GO" id="GO:0005829">
    <property type="term" value="C:cytosol"/>
    <property type="evidence" value="ECO:0007669"/>
    <property type="project" value="TreeGrafter"/>
</dbReference>
<dbReference type="GO" id="GO:0002161">
    <property type="term" value="F:aminoacyl-tRNA deacylase activity"/>
    <property type="evidence" value="ECO:0007669"/>
    <property type="project" value="InterPro"/>
</dbReference>
<dbReference type="GO" id="GO:0005524">
    <property type="term" value="F:ATP binding"/>
    <property type="evidence" value="ECO:0007669"/>
    <property type="project" value="UniProtKB-UniRule"/>
</dbReference>
<dbReference type="GO" id="GO:0004823">
    <property type="term" value="F:leucine-tRNA ligase activity"/>
    <property type="evidence" value="ECO:0007669"/>
    <property type="project" value="UniProtKB-UniRule"/>
</dbReference>
<dbReference type="GO" id="GO:0006429">
    <property type="term" value="P:leucyl-tRNA aminoacylation"/>
    <property type="evidence" value="ECO:0007669"/>
    <property type="project" value="UniProtKB-UniRule"/>
</dbReference>
<dbReference type="CDD" id="cd07958">
    <property type="entry name" value="Anticodon_Ia_Leu_BEm"/>
    <property type="match status" value="1"/>
</dbReference>
<dbReference type="CDD" id="cd00812">
    <property type="entry name" value="LeuRS_core"/>
    <property type="match status" value="1"/>
</dbReference>
<dbReference type="FunFam" id="1.10.730.10:FF:000003">
    <property type="entry name" value="Leucine--tRNA ligase"/>
    <property type="match status" value="1"/>
</dbReference>
<dbReference type="FunFam" id="2.20.28.290:FF:000001">
    <property type="entry name" value="Leucine--tRNA ligase"/>
    <property type="match status" value="1"/>
</dbReference>
<dbReference type="FunFam" id="3.10.20.590:FF:000001">
    <property type="entry name" value="Leucine--tRNA ligase"/>
    <property type="match status" value="1"/>
</dbReference>
<dbReference type="FunFam" id="3.40.50.620:FF:000003">
    <property type="entry name" value="Leucine--tRNA ligase"/>
    <property type="match status" value="1"/>
</dbReference>
<dbReference type="FunFam" id="3.40.50.620:FF:000124">
    <property type="entry name" value="Leucine--tRNA ligase"/>
    <property type="match status" value="1"/>
</dbReference>
<dbReference type="FunFam" id="3.90.740.10:FF:000012">
    <property type="entry name" value="Leucine--tRNA ligase"/>
    <property type="match status" value="1"/>
</dbReference>
<dbReference type="Gene3D" id="2.20.28.290">
    <property type="match status" value="1"/>
</dbReference>
<dbReference type="Gene3D" id="3.10.20.590">
    <property type="match status" value="1"/>
</dbReference>
<dbReference type="Gene3D" id="3.40.50.620">
    <property type="entry name" value="HUPs"/>
    <property type="match status" value="2"/>
</dbReference>
<dbReference type="Gene3D" id="1.10.730.10">
    <property type="entry name" value="Isoleucyl-tRNA Synthetase, Domain 1"/>
    <property type="match status" value="2"/>
</dbReference>
<dbReference type="Gene3D" id="3.90.740.10">
    <property type="entry name" value="Valyl/Leucyl/Isoleucyl-tRNA synthetase, editing domain"/>
    <property type="match status" value="1"/>
</dbReference>
<dbReference type="HAMAP" id="MF_00049_B">
    <property type="entry name" value="Leu_tRNA_synth_B"/>
    <property type="match status" value="1"/>
</dbReference>
<dbReference type="InterPro" id="IPR001412">
    <property type="entry name" value="aa-tRNA-synth_I_CS"/>
</dbReference>
<dbReference type="InterPro" id="IPR002300">
    <property type="entry name" value="aa-tRNA-synth_Ia"/>
</dbReference>
<dbReference type="InterPro" id="IPR002302">
    <property type="entry name" value="Leu-tRNA-ligase"/>
</dbReference>
<dbReference type="InterPro" id="IPR025709">
    <property type="entry name" value="Leu_tRNA-synth_edit"/>
</dbReference>
<dbReference type="InterPro" id="IPR013155">
    <property type="entry name" value="M/V/L/I-tRNA-synth_anticd-bd"/>
</dbReference>
<dbReference type="InterPro" id="IPR015413">
    <property type="entry name" value="Methionyl/Leucyl_tRNA_Synth"/>
</dbReference>
<dbReference type="InterPro" id="IPR014729">
    <property type="entry name" value="Rossmann-like_a/b/a_fold"/>
</dbReference>
<dbReference type="InterPro" id="IPR009080">
    <property type="entry name" value="tRNAsynth_Ia_anticodon-bd"/>
</dbReference>
<dbReference type="InterPro" id="IPR009008">
    <property type="entry name" value="Val/Leu/Ile-tRNA-synth_edit"/>
</dbReference>
<dbReference type="NCBIfam" id="TIGR00396">
    <property type="entry name" value="leuS_bact"/>
    <property type="match status" value="1"/>
</dbReference>
<dbReference type="PANTHER" id="PTHR43740:SF2">
    <property type="entry name" value="LEUCINE--TRNA LIGASE, MITOCHONDRIAL"/>
    <property type="match status" value="1"/>
</dbReference>
<dbReference type="PANTHER" id="PTHR43740">
    <property type="entry name" value="LEUCYL-TRNA SYNTHETASE"/>
    <property type="match status" value="1"/>
</dbReference>
<dbReference type="Pfam" id="PF08264">
    <property type="entry name" value="Anticodon_1"/>
    <property type="match status" value="1"/>
</dbReference>
<dbReference type="Pfam" id="PF00133">
    <property type="entry name" value="tRNA-synt_1"/>
    <property type="match status" value="2"/>
</dbReference>
<dbReference type="Pfam" id="PF13603">
    <property type="entry name" value="tRNA-synt_1_2"/>
    <property type="match status" value="1"/>
</dbReference>
<dbReference type="Pfam" id="PF09334">
    <property type="entry name" value="tRNA-synt_1g"/>
    <property type="match status" value="1"/>
</dbReference>
<dbReference type="PRINTS" id="PR00985">
    <property type="entry name" value="TRNASYNTHLEU"/>
</dbReference>
<dbReference type="SUPFAM" id="SSF47323">
    <property type="entry name" value="Anticodon-binding domain of a subclass of class I aminoacyl-tRNA synthetases"/>
    <property type="match status" value="1"/>
</dbReference>
<dbReference type="SUPFAM" id="SSF52374">
    <property type="entry name" value="Nucleotidylyl transferase"/>
    <property type="match status" value="1"/>
</dbReference>
<dbReference type="SUPFAM" id="SSF50677">
    <property type="entry name" value="ValRS/IleRS/LeuRS editing domain"/>
    <property type="match status" value="1"/>
</dbReference>
<dbReference type="PROSITE" id="PS00178">
    <property type="entry name" value="AA_TRNA_LIGASE_I"/>
    <property type="match status" value="1"/>
</dbReference>
<gene>
    <name evidence="1" type="primary">leuS</name>
    <name type="ordered locus">PP_4794</name>
</gene>
<feature type="chain" id="PRO_0000152067" description="Leucine--tRNA ligase">
    <location>
        <begin position="1"/>
        <end position="868"/>
    </location>
</feature>
<feature type="short sequence motif" description="'HIGH' region">
    <location>
        <begin position="42"/>
        <end position="52"/>
    </location>
</feature>
<feature type="short sequence motif" description="'KMSKS' region">
    <location>
        <begin position="627"/>
        <end position="631"/>
    </location>
</feature>
<feature type="binding site" evidence="1">
    <location>
        <position position="630"/>
    </location>
    <ligand>
        <name>ATP</name>
        <dbReference type="ChEBI" id="CHEBI:30616"/>
    </ligand>
</feature>
<sequence length="868" mass="96698">MHEQYTPRDIEAAAQKFWDEQQSFAVTEQPGKDTYYCLSMFPYPSGKLHMGHVRNYTIGDVIARYQRMLGKNVLQPMGWDAFGMPAENAAMKNNVAPAKWTYENIDYMKTQLKSLGLAIDWAREVTTCKPDYYRWEQWLFTRLFEKGIIYRKNGTVNWDPADQTVLANEQVIDGRGWRSGALIEKREIPMYYFRITDYADELLESLDELPGWPEQVKTMQRNWIGKSRGMEVQFPYDKASIGHEGTLKVFTTRPDTLMGATYVAVAAEHPLATQAAQGNPALQAFIDECKSGSVAEADMATQEKKGMATSLLVEHPLTGEKLPVWVANYVLMHYGDGAVMAVPAHDERDFEFAHKYNLPVKAVVRTSAGDEVGSEWQAAYGEHGQLINSAEFDGLDFAGAFDAIEAALIRKELGKSRTQFRLRDWGISRQRYWGCPIPIIHCPSCGDVPVPEDQLPVTLPENVVPDGAGSPLARMPEFYECSCPKCGAAAKRETDTMDTFVESSWYFARYASPNYDKGLVDPKAANHWLPVDQYIGGIEHAILHLLYARFFHKLMRDEGLVTSNEPFKNLLTQGMVVAETYYRVASNGGKDWFNPADVEIERDAKAKIIGARLKTDGLPVEIGGTEKMSKSKNNGVDPQSMIEAYGADTCRLFMMFASPPDMSLEWSDSGVEGASRFLRRVWRLAQAHVSQGLPGKLDVAALDDAQKVIRRAIHAAIKQASTDVGQFHKFNTAIAQVMTVMNVLEKAPQATEQDRALLQEGLEAVTLLLAPITPHISHALWQHLGHAGSVIDAAWPSVDEQALVQDSITLVVQVNGKLRGQVEMPAAASREEVEAAARSNENVLRFIDGLTIRKVIVVPGKLVNIVAN</sequence>
<proteinExistence type="inferred from homology"/>
<organism>
    <name type="scientific">Pseudomonas putida (strain ATCC 47054 / DSM 6125 / CFBP 8728 / NCIMB 11950 / KT2440)</name>
    <dbReference type="NCBI Taxonomy" id="160488"/>
    <lineage>
        <taxon>Bacteria</taxon>
        <taxon>Pseudomonadati</taxon>
        <taxon>Pseudomonadota</taxon>
        <taxon>Gammaproteobacteria</taxon>
        <taxon>Pseudomonadales</taxon>
        <taxon>Pseudomonadaceae</taxon>
        <taxon>Pseudomonas</taxon>
    </lineage>
</organism>
<keyword id="KW-0030">Aminoacyl-tRNA synthetase</keyword>
<keyword id="KW-0067">ATP-binding</keyword>
<keyword id="KW-0963">Cytoplasm</keyword>
<keyword id="KW-0436">Ligase</keyword>
<keyword id="KW-0547">Nucleotide-binding</keyword>
<keyword id="KW-0648">Protein biosynthesis</keyword>
<keyword id="KW-1185">Reference proteome</keyword>
<accession>Q88DN1</accession>
<comment type="catalytic activity">
    <reaction evidence="1">
        <text>tRNA(Leu) + L-leucine + ATP = L-leucyl-tRNA(Leu) + AMP + diphosphate</text>
        <dbReference type="Rhea" id="RHEA:11688"/>
        <dbReference type="Rhea" id="RHEA-COMP:9613"/>
        <dbReference type="Rhea" id="RHEA-COMP:9622"/>
        <dbReference type="ChEBI" id="CHEBI:30616"/>
        <dbReference type="ChEBI" id="CHEBI:33019"/>
        <dbReference type="ChEBI" id="CHEBI:57427"/>
        <dbReference type="ChEBI" id="CHEBI:78442"/>
        <dbReference type="ChEBI" id="CHEBI:78494"/>
        <dbReference type="ChEBI" id="CHEBI:456215"/>
        <dbReference type="EC" id="6.1.1.4"/>
    </reaction>
</comment>
<comment type="subcellular location">
    <subcellularLocation>
        <location evidence="1">Cytoplasm</location>
    </subcellularLocation>
</comment>
<comment type="similarity">
    <text evidence="1">Belongs to the class-I aminoacyl-tRNA synthetase family.</text>
</comment>
<name>SYL_PSEPK</name>
<protein>
    <recommendedName>
        <fullName evidence="1">Leucine--tRNA ligase</fullName>
        <ecNumber evidence="1">6.1.1.4</ecNumber>
    </recommendedName>
    <alternativeName>
        <fullName evidence="1">Leucyl-tRNA synthetase</fullName>
        <shortName evidence="1">LeuRS</shortName>
    </alternativeName>
</protein>